<organism>
    <name type="scientific">Thermoplasma volcanium (strain ATCC 51530 / DSM 4299 / JCM 9571 / NBRC 15438 / GSS1)</name>
    <dbReference type="NCBI Taxonomy" id="273116"/>
    <lineage>
        <taxon>Archaea</taxon>
        <taxon>Methanobacteriati</taxon>
        <taxon>Thermoplasmatota</taxon>
        <taxon>Thermoplasmata</taxon>
        <taxon>Thermoplasmatales</taxon>
        <taxon>Thermoplasmataceae</taxon>
        <taxon>Thermoplasma</taxon>
    </lineage>
</organism>
<dbReference type="EMBL" id="BA000011">
    <property type="protein sequence ID" value="BAB59149.1"/>
    <property type="molecule type" value="Genomic_DNA"/>
</dbReference>
<dbReference type="RefSeq" id="WP_010916264.1">
    <property type="nucleotide sequence ID" value="NC_002689.2"/>
</dbReference>
<dbReference type="SMR" id="Q97CU4"/>
<dbReference type="STRING" id="273116.gene:9380772"/>
<dbReference type="PaxDb" id="273116-14324221"/>
<dbReference type="DNASU" id="1441492"/>
<dbReference type="GeneID" id="1441492"/>
<dbReference type="KEGG" id="tvo:TVG0008143"/>
<dbReference type="eggNOG" id="arCOG01344">
    <property type="taxonomic scope" value="Archaea"/>
</dbReference>
<dbReference type="HOGENOM" id="CLU_108559_1_0_2"/>
<dbReference type="OrthoDB" id="371836at2157"/>
<dbReference type="PhylomeDB" id="Q97CU4"/>
<dbReference type="Proteomes" id="UP000001017">
    <property type="component" value="Chromosome"/>
</dbReference>
<dbReference type="GO" id="GO:0022627">
    <property type="term" value="C:cytosolic small ribosomal subunit"/>
    <property type="evidence" value="ECO:0007669"/>
    <property type="project" value="TreeGrafter"/>
</dbReference>
<dbReference type="GO" id="GO:0003723">
    <property type="term" value="F:RNA binding"/>
    <property type="evidence" value="ECO:0007669"/>
    <property type="project" value="TreeGrafter"/>
</dbReference>
<dbReference type="GO" id="GO:0003735">
    <property type="term" value="F:structural constituent of ribosome"/>
    <property type="evidence" value="ECO:0007669"/>
    <property type="project" value="InterPro"/>
</dbReference>
<dbReference type="GO" id="GO:0000028">
    <property type="term" value="P:ribosomal small subunit assembly"/>
    <property type="evidence" value="ECO:0007669"/>
    <property type="project" value="TreeGrafter"/>
</dbReference>
<dbReference type="GO" id="GO:0006412">
    <property type="term" value="P:translation"/>
    <property type="evidence" value="ECO:0007669"/>
    <property type="project" value="UniProtKB-UniRule"/>
</dbReference>
<dbReference type="Gene3D" id="1.10.10.10">
    <property type="entry name" value="Winged helix-like DNA-binding domain superfamily/Winged helix DNA-binding domain"/>
    <property type="match status" value="1"/>
</dbReference>
<dbReference type="HAMAP" id="MF_01474">
    <property type="entry name" value="Ribosomal_eS19"/>
    <property type="match status" value="1"/>
</dbReference>
<dbReference type="InterPro" id="IPR001266">
    <property type="entry name" value="Ribosomal_eS19"/>
</dbReference>
<dbReference type="InterPro" id="IPR027548">
    <property type="entry name" value="Ribosomal_eS19_archaeal"/>
</dbReference>
<dbReference type="InterPro" id="IPR036388">
    <property type="entry name" value="WH-like_DNA-bd_sf"/>
</dbReference>
<dbReference type="InterPro" id="IPR036390">
    <property type="entry name" value="WH_DNA-bd_sf"/>
</dbReference>
<dbReference type="NCBIfam" id="NF006811">
    <property type="entry name" value="PRK09333.1"/>
    <property type="match status" value="1"/>
</dbReference>
<dbReference type="PANTHER" id="PTHR11710">
    <property type="entry name" value="40S RIBOSOMAL PROTEIN S19"/>
    <property type="match status" value="1"/>
</dbReference>
<dbReference type="PANTHER" id="PTHR11710:SF0">
    <property type="entry name" value="40S RIBOSOMAL PROTEIN S19"/>
    <property type="match status" value="1"/>
</dbReference>
<dbReference type="Pfam" id="PF01090">
    <property type="entry name" value="Ribosomal_S19e"/>
    <property type="match status" value="1"/>
</dbReference>
<dbReference type="SMART" id="SM01413">
    <property type="entry name" value="Ribosomal_S19e"/>
    <property type="match status" value="1"/>
</dbReference>
<dbReference type="SUPFAM" id="SSF46785">
    <property type="entry name" value="Winged helix' DNA-binding domain"/>
    <property type="match status" value="1"/>
</dbReference>
<proteinExistence type="inferred from homology"/>
<protein>
    <recommendedName>
        <fullName evidence="1">Small ribosomal subunit protein eS19</fullName>
    </recommendedName>
    <alternativeName>
        <fullName evidence="2">30S ribosomal protein S19e</fullName>
    </alternativeName>
</protein>
<comment type="function">
    <text evidence="1">May be involved in maturation of the 30S ribosomal subunit.</text>
</comment>
<comment type="subunit">
    <text evidence="1">Part of the 30S ribosomal subunit.</text>
</comment>
<comment type="similarity">
    <text evidence="1">Belongs to the eukaryotic ribosomal protein eS19 family.</text>
</comment>
<name>RS19E_THEVO</name>
<reference key="1">
    <citation type="journal article" date="2000" name="Proc. Natl. Acad. Sci. U.S.A.">
        <title>Archaeal adaptation to higher temperatures revealed by genomic sequence of Thermoplasma volcanium.</title>
        <authorList>
            <person name="Kawashima T."/>
            <person name="Amano N."/>
            <person name="Koike H."/>
            <person name="Makino S."/>
            <person name="Higuchi S."/>
            <person name="Kawashima-Ohya Y."/>
            <person name="Watanabe K."/>
            <person name="Yamazaki M."/>
            <person name="Kanehori K."/>
            <person name="Kawamoto T."/>
            <person name="Nunoshiba T."/>
            <person name="Yamamoto Y."/>
            <person name="Aramaki H."/>
            <person name="Makino K."/>
            <person name="Suzuki M."/>
        </authorList>
    </citation>
    <scope>NUCLEOTIDE SEQUENCE [LARGE SCALE GENOMIC DNA]</scope>
    <source>
        <strain>ATCC 51530 / DSM 4299 / JCM 9571 / NBRC 15438 / GSS1</strain>
    </source>
</reference>
<gene>
    <name evidence="1" type="primary">rps19e</name>
    <name type="ordered locus">TV0007</name>
    <name type="ORF">TVG0008143</name>
</gene>
<evidence type="ECO:0000255" key="1">
    <source>
        <dbReference type="HAMAP-Rule" id="MF_01474"/>
    </source>
</evidence>
<evidence type="ECO:0000305" key="2"/>
<sequence>MVSVKYVPSDMLINYVSGKLKEEKKIKEPNWVKFVKTGVSKEKPPLQDDWIYVRAASMLRKLYINGYLGISRMSSEYGGKVDRGSKRYHAASGSRSITRFLFHELESAGLVQKTQKGRSLSPQGMSLLDNASKEIIKQLAQKDPLYEKFI</sequence>
<accession>Q97CU4</accession>
<keyword id="KW-0687">Ribonucleoprotein</keyword>
<keyword id="KW-0689">Ribosomal protein</keyword>
<feature type="chain" id="PRO_0000153844" description="Small ribosomal subunit protein eS19">
    <location>
        <begin position="1"/>
        <end position="150"/>
    </location>
</feature>